<evidence type="ECO:0000255" key="1">
    <source>
        <dbReference type="HAMAP-Rule" id="MF_01928"/>
    </source>
</evidence>
<feature type="chain" id="PRO_0000075015" description="N5-carboxyaminoimidazole ribonucleotide synthase">
    <location>
        <begin position="1"/>
        <end position="377"/>
    </location>
</feature>
<feature type="domain" description="ATP-grasp" evidence="1">
    <location>
        <begin position="97"/>
        <end position="287"/>
    </location>
</feature>
<feature type="binding site" evidence="1">
    <location>
        <position position="93"/>
    </location>
    <ligand>
        <name>ATP</name>
        <dbReference type="ChEBI" id="CHEBI:30616"/>
    </ligand>
</feature>
<feature type="binding site" evidence="1">
    <location>
        <position position="133"/>
    </location>
    <ligand>
        <name>ATP</name>
        <dbReference type="ChEBI" id="CHEBI:30616"/>
    </ligand>
</feature>
<feature type="binding site" evidence="1">
    <location>
        <begin position="138"/>
        <end position="144"/>
    </location>
    <ligand>
        <name>ATP</name>
        <dbReference type="ChEBI" id="CHEBI:30616"/>
    </ligand>
</feature>
<feature type="binding site" evidence="1">
    <location>
        <begin position="175"/>
        <end position="178"/>
    </location>
    <ligand>
        <name>ATP</name>
        <dbReference type="ChEBI" id="CHEBI:30616"/>
    </ligand>
</feature>
<feature type="binding site" evidence="1">
    <location>
        <position position="183"/>
    </location>
    <ligand>
        <name>ATP</name>
        <dbReference type="ChEBI" id="CHEBI:30616"/>
    </ligand>
</feature>
<feature type="binding site" evidence="1">
    <location>
        <position position="206"/>
    </location>
    <ligand>
        <name>ATP</name>
        <dbReference type="ChEBI" id="CHEBI:30616"/>
    </ligand>
</feature>
<feature type="binding site" evidence="1">
    <location>
        <begin position="257"/>
        <end position="258"/>
    </location>
    <ligand>
        <name>ATP</name>
        <dbReference type="ChEBI" id="CHEBI:30616"/>
    </ligand>
</feature>
<keyword id="KW-0067">ATP-binding</keyword>
<keyword id="KW-0436">Ligase</keyword>
<keyword id="KW-0547">Nucleotide-binding</keyword>
<keyword id="KW-0658">Purine biosynthesis</keyword>
<keyword id="KW-1185">Reference proteome</keyword>
<proteinExistence type="inferred from homology"/>
<sequence>MRVLVLGAGQLARMMSLAGAPLNIETIAFDVGSENIVHPLTQTVLGHGLEQAIEQVDVITAEFEHIPHPILDLCARSGKLYPSAEAIKAGGDRRLEKALLDRAQVANARYTMIRSRDDLTSAIAEIGLPMVLKSALGGYDGKGQWRLKEPTQIESVWQELAQYLAANPEQAIVAEEFVAFDREVSLVGARNLVGDVVVYPLAENVHTQGVLSLSTAIDAPALQTQAKAMFKAVAEQLNYVGVLALEFFEVQGQLLVNEIAPRVHNSGHWTQQGAETCQFENHLRAVCGLPLGSTKLVRETAMINILGEDQLPAEVLALEGCHVHWYGKAKRSGRKMGHINVTADYSGELQRKLCQLATVLDEKAFPAVHAVAKEIQP</sequence>
<reference key="1">
    <citation type="journal article" date="2000" name="Nature">
        <title>DNA sequence of both chromosomes of the cholera pathogen Vibrio cholerae.</title>
        <authorList>
            <person name="Heidelberg J.F."/>
            <person name="Eisen J.A."/>
            <person name="Nelson W.C."/>
            <person name="Clayton R.A."/>
            <person name="Gwinn M.L."/>
            <person name="Dodson R.J."/>
            <person name="Haft D.H."/>
            <person name="Hickey E.K."/>
            <person name="Peterson J.D."/>
            <person name="Umayam L.A."/>
            <person name="Gill S.R."/>
            <person name="Nelson K.E."/>
            <person name="Read T.D."/>
            <person name="Tettelin H."/>
            <person name="Richardson D.L."/>
            <person name="Ermolaeva M.D."/>
            <person name="Vamathevan J.J."/>
            <person name="Bass S."/>
            <person name="Qin H."/>
            <person name="Dragoi I."/>
            <person name="Sellers P."/>
            <person name="McDonald L.A."/>
            <person name="Utterback T.R."/>
            <person name="Fleischmann R.D."/>
            <person name="Nierman W.C."/>
            <person name="White O."/>
            <person name="Salzberg S.L."/>
            <person name="Smith H.O."/>
            <person name="Colwell R.R."/>
            <person name="Mekalanos J.J."/>
            <person name="Venter J.C."/>
            <person name="Fraser C.M."/>
        </authorList>
    </citation>
    <scope>NUCLEOTIDE SEQUENCE [LARGE SCALE GENOMIC DNA]</scope>
    <source>
        <strain>ATCC 39315 / El Tor Inaba N16961</strain>
    </source>
</reference>
<name>PURK_VIBCH</name>
<gene>
    <name evidence="1" type="primary">purK</name>
    <name type="ordered locus">VC_0051</name>
</gene>
<organism>
    <name type="scientific">Vibrio cholerae serotype O1 (strain ATCC 39315 / El Tor Inaba N16961)</name>
    <dbReference type="NCBI Taxonomy" id="243277"/>
    <lineage>
        <taxon>Bacteria</taxon>
        <taxon>Pseudomonadati</taxon>
        <taxon>Pseudomonadota</taxon>
        <taxon>Gammaproteobacteria</taxon>
        <taxon>Vibrionales</taxon>
        <taxon>Vibrionaceae</taxon>
        <taxon>Vibrio</taxon>
    </lineage>
</organism>
<dbReference type="EC" id="6.3.4.18" evidence="1"/>
<dbReference type="EMBL" id="AE003852">
    <property type="protein sequence ID" value="AAF93229.1"/>
    <property type="molecule type" value="Genomic_DNA"/>
</dbReference>
<dbReference type="PIR" id="B82370">
    <property type="entry name" value="B82370"/>
</dbReference>
<dbReference type="RefSeq" id="NP_229710.1">
    <property type="nucleotide sequence ID" value="NC_002505.1"/>
</dbReference>
<dbReference type="RefSeq" id="WP_001265400.1">
    <property type="nucleotide sequence ID" value="NZ_LT906614.1"/>
</dbReference>
<dbReference type="SMR" id="Q9KVT8"/>
<dbReference type="STRING" id="243277.VC_0051"/>
<dbReference type="DNASU" id="2614419"/>
<dbReference type="EnsemblBacteria" id="AAF93229">
    <property type="protein sequence ID" value="AAF93229"/>
    <property type="gene ID" value="VC_0051"/>
</dbReference>
<dbReference type="KEGG" id="vch:VC_0051"/>
<dbReference type="PATRIC" id="fig|243277.26.peg.50"/>
<dbReference type="eggNOG" id="COG0026">
    <property type="taxonomic scope" value="Bacteria"/>
</dbReference>
<dbReference type="HOGENOM" id="CLU_011534_0_0_6"/>
<dbReference type="UniPathway" id="UPA00074">
    <property type="reaction ID" value="UER00942"/>
</dbReference>
<dbReference type="Proteomes" id="UP000000584">
    <property type="component" value="Chromosome 1"/>
</dbReference>
<dbReference type="GO" id="GO:0005829">
    <property type="term" value="C:cytosol"/>
    <property type="evidence" value="ECO:0000318"/>
    <property type="project" value="GO_Central"/>
</dbReference>
<dbReference type="GO" id="GO:0034028">
    <property type="term" value="F:5-(carboxyamino)imidazole ribonucleotide synthase activity"/>
    <property type="evidence" value="ECO:0007669"/>
    <property type="project" value="UniProtKB-UniRule"/>
</dbReference>
<dbReference type="GO" id="GO:0005524">
    <property type="term" value="F:ATP binding"/>
    <property type="evidence" value="ECO:0007669"/>
    <property type="project" value="UniProtKB-KW"/>
</dbReference>
<dbReference type="GO" id="GO:0046872">
    <property type="term" value="F:metal ion binding"/>
    <property type="evidence" value="ECO:0007669"/>
    <property type="project" value="InterPro"/>
</dbReference>
<dbReference type="GO" id="GO:0004638">
    <property type="term" value="F:phosphoribosylaminoimidazole carboxylase activity"/>
    <property type="evidence" value="ECO:0007669"/>
    <property type="project" value="InterPro"/>
</dbReference>
<dbReference type="GO" id="GO:0006189">
    <property type="term" value="P:'de novo' IMP biosynthetic process"/>
    <property type="evidence" value="ECO:0007669"/>
    <property type="project" value="UniProtKB-UniRule"/>
</dbReference>
<dbReference type="FunFam" id="3.30.1490.20:FF:000015">
    <property type="entry name" value="N5-carboxyaminoimidazole ribonucleotide synthase"/>
    <property type="match status" value="1"/>
</dbReference>
<dbReference type="FunFam" id="3.30.470.20:FF:000029">
    <property type="entry name" value="N5-carboxyaminoimidazole ribonucleotide synthase"/>
    <property type="match status" value="1"/>
</dbReference>
<dbReference type="Gene3D" id="3.40.50.20">
    <property type="match status" value="1"/>
</dbReference>
<dbReference type="Gene3D" id="3.30.1490.20">
    <property type="entry name" value="ATP-grasp fold, A domain"/>
    <property type="match status" value="1"/>
</dbReference>
<dbReference type="Gene3D" id="3.30.470.20">
    <property type="entry name" value="ATP-grasp fold, B domain"/>
    <property type="match status" value="1"/>
</dbReference>
<dbReference type="HAMAP" id="MF_01928">
    <property type="entry name" value="PurK"/>
    <property type="match status" value="1"/>
</dbReference>
<dbReference type="InterPro" id="IPR011761">
    <property type="entry name" value="ATP-grasp"/>
</dbReference>
<dbReference type="InterPro" id="IPR003135">
    <property type="entry name" value="ATP-grasp_carboxylate-amine"/>
</dbReference>
<dbReference type="InterPro" id="IPR013815">
    <property type="entry name" value="ATP_grasp_subdomain_1"/>
</dbReference>
<dbReference type="InterPro" id="IPR016185">
    <property type="entry name" value="PreATP-grasp_dom_sf"/>
</dbReference>
<dbReference type="InterPro" id="IPR005875">
    <property type="entry name" value="PurK"/>
</dbReference>
<dbReference type="InterPro" id="IPR040686">
    <property type="entry name" value="PurK_C"/>
</dbReference>
<dbReference type="InterPro" id="IPR054350">
    <property type="entry name" value="PurT/PurK_preATP-grasp"/>
</dbReference>
<dbReference type="InterPro" id="IPR011054">
    <property type="entry name" value="Rudment_hybrid_motif"/>
</dbReference>
<dbReference type="NCBIfam" id="NF004679">
    <property type="entry name" value="PRK06019.1-5"/>
    <property type="match status" value="1"/>
</dbReference>
<dbReference type="NCBIfam" id="TIGR01161">
    <property type="entry name" value="purK"/>
    <property type="match status" value="1"/>
</dbReference>
<dbReference type="PANTHER" id="PTHR11609:SF5">
    <property type="entry name" value="PHOSPHORIBOSYLAMINOIMIDAZOLE CARBOXYLASE"/>
    <property type="match status" value="1"/>
</dbReference>
<dbReference type="PANTHER" id="PTHR11609">
    <property type="entry name" value="PURINE BIOSYNTHESIS PROTEIN 6/7, PUR6/7"/>
    <property type="match status" value="1"/>
</dbReference>
<dbReference type="Pfam" id="PF02222">
    <property type="entry name" value="ATP-grasp"/>
    <property type="match status" value="1"/>
</dbReference>
<dbReference type="Pfam" id="PF17769">
    <property type="entry name" value="PurK_C"/>
    <property type="match status" value="1"/>
</dbReference>
<dbReference type="Pfam" id="PF22660">
    <property type="entry name" value="RS_preATP-grasp-like"/>
    <property type="match status" value="1"/>
</dbReference>
<dbReference type="SUPFAM" id="SSF56059">
    <property type="entry name" value="Glutathione synthetase ATP-binding domain-like"/>
    <property type="match status" value="1"/>
</dbReference>
<dbReference type="SUPFAM" id="SSF52440">
    <property type="entry name" value="PreATP-grasp domain"/>
    <property type="match status" value="1"/>
</dbReference>
<dbReference type="SUPFAM" id="SSF51246">
    <property type="entry name" value="Rudiment single hybrid motif"/>
    <property type="match status" value="1"/>
</dbReference>
<dbReference type="PROSITE" id="PS50975">
    <property type="entry name" value="ATP_GRASP"/>
    <property type="match status" value="1"/>
</dbReference>
<protein>
    <recommendedName>
        <fullName evidence="1">N5-carboxyaminoimidazole ribonucleotide synthase</fullName>
        <shortName evidence="1">N5-CAIR synthase</shortName>
        <ecNumber evidence="1">6.3.4.18</ecNumber>
    </recommendedName>
    <alternativeName>
        <fullName evidence="1">5-(carboxyamino)imidazole ribonucleotide synthetase</fullName>
    </alternativeName>
</protein>
<accession>Q9KVT8</accession>
<comment type="function">
    <text evidence="1">Catalyzes the ATP-dependent conversion of 5-aminoimidazole ribonucleotide (AIR) and HCO(3)(-) to N5-carboxyaminoimidazole ribonucleotide (N5-CAIR).</text>
</comment>
<comment type="catalytic activity">
    <reaction evidence="1">
        <text>5-amino-1-(5-phospho-beta-D-ribosyl)imidazole + hydrogencarbonate + ATP = 5-carboxyamino-1-(5-phospho-D-ribosyl)imidazole + ADP + phosphate + 2 H(+)</text>
        <dbReference type="Rhea" id="RHEA:19317"/>
        <dbReference type="ChEBI" id="CHEBI:15378"/>
        <dbReference type="ChEBI" id="CHEBI:17544"/>
        <dbReference type="ChEBI" id="CHEBI:30616"/>
        <dbReference type="ChEBI" id="CHEBI:43474"/>
        <dbReference type="ChEBI" id="CHEBI:58730"/>
        <dbReference type="ChEBI" id="CHEBI:137981"/>
        <dbReference type="ChEBI" id="CHEBI:456216"/>
        <dbReference type="EC" id="6.3.4.18"/>
    </reaction>
</comment>
<comment type="pathway">
    <text evidence="1">Purine metabolism; IMP biosynthesis via de novo pathway; 5-amino-1-(5-phospho-D-ribosyl)imidazole-4-carboxylate from 5-amino-1-(5-phospho-D-ribosyl)imidazole (N5-CAIR route): step 1/2.</text>
</comment>
<comment type="subunit">
    <text evidence="1">Homodimer.</text>
</comment>
<comment type="similarity">
    <text evidence="1">Belongs to the PurK/PurT family.</text>
</comment>